<proteinExistence type="inferred from homology"/>
<dbReference type="EMBL" id="CP000800">
    <property type="protein sequence ID" value="ABV20012.1"/>
    <property type="molecule type" value="Genomic_DNA"/>
</dbReference>
<dbReference type="RefSeq" id="WP_001130692.1">
    <property type="nucleotide sequence ID" value="NC_009801.1"/>
</dbReference>
<dbReference type="BMRB" id="A7ZKY3"/>
<dbReference type="SMR" id="A7ZKY3"/>
<dbReference type="GeneID" id="93775274"/>
<dbReference type="KEGG" id="ecw:EcE24377A_1357"/>
<dbReference type="HOGENOM" id="CLU_092816_1_1_6"/>
<dbReference type="Proteomes" id="UP000001122">
    <property type="component" value="Chromosome"/>
</dbReference>
<dbReference type="GO" id="GO:0009279">
    <property type="term" value="C:cell outer membrane"/>
    <property type="evidence" value="ECO:0007669"/>
    <property type="project" value="UniProtKB-SubCell"/>
</dbReference>
<dbReference type="GO" id="GO:0044874">
    <property type="term" value="P:lipoprotein localization to outer membrane"/>
    <property type="evidence" value="ECO:0007669"/>
    <property type="project" value="UniProtKB-UniRule"/>
</dbReference>
<dbReference type="GO" id="GO:0015031">
    <property type="term" value="P:protein transport"/>
    <property type="evidence" value="ECO:0007669"/>
    <property type="project" value="UniProtKB-KW"/>
</dbReference>
<dbReference type="CDD" id="cd16326">
    <property type="entry name" value="LolB"/>
    <property type="match status" value="1"/>
</dbReference>
<dbReference type="FunFam" id="2.50.20.10:FF:000002">
    <property type="entry name" value="Outer-membrane lipoprotein LolB"/>
    <property type="match status" value="1"/>
</dbReference>
<dbReference type="Gene3D" id="2.50.20.10">
    <property type="entry name" value="Lipoprotein localisation LolA/LolB/LppX"/>
    <property type="match status" value="1"/>
</dbReference>
<dbReference type="HAMAP" id="MF_00233">
    <property type="entry name" value="LolB"/>
    <property type="match status" value="1"/>
</dbReference>
<dbReference type="InterPro" id="IPR029046">
    <property type="entry name" value="LolA/LolB/LppX"/>
</dbReference>
<dbReference type="InterPro" id="IPR004565">
    <property type="entry name" value="OM_lipoprot_LolB"/>
</dbReference>
<dbReference type="NCBIfam" id="TIGR00548">
    <property type="entry name" value="lolB"/>
    <property type="match status" value="1"/>
</dbReference>
<dbReference type="Pfam" id="PF03550">
    <property type="entry name" value="LolB"/>
    <property type="match status" value="1"/>
</dbReference>
<dbReference type="SUPFAM" id="SSF89392">
    <property type="entry name" value="Prokaryotic lipoproteins and lipoprotein localization factors"/>
    <property type="match status" value="1"/>
</dbReference>
<dbReference type="PROSITE" id="PS51257">
    <property type="entry name" value="PROKAR_LIPOPROTEIN"/>
    <property type="match status" value="1"/>
</dbReference>
<accession>A7ZKY3</accession>
<protein>
    <recommendedName>
        <fullName evidence="1">Outer-membrane lipoprotein LolB</fullName>
    </recommendedName>
</protein>
<keyword id="KW-0998">Cell outer membrane</keyword>
<keyword id="KW-0143">Chaperone</keyword>
<keyword id="KW-0449">Lipoprotein</keyword>
<keyword id="KW-0472">Membrane</keyword>
<keyword id="KW-0564">Palmitate</keyword>
<keyword id="KW-0653">Protein transport</keyword>
<keyword id="KW-1185">Reference proteome</keyword>
<keyword id="KW-0732">Signal</keyword>
<keyword id="KW-0813">Transport</keyword>
<evidence type="ECO:0000255" key="1">
    <source>
        <dbReference type="HAMAP-Rule" id="MF_00233"/>
    </source>
</evidence>
<sequence length="207" mass="23551">MPLPDFRLIRLLPLAALVLTACSVTTPKGPGKSPDSPQWRQHQQDVRNLNQYQTRGAFAYISDQQKVYARFFWQQTGQDRYRLLLTNPLGSTELELNAQPGNVQLVDNKGQRYTADDAEEMIGKLTGMPIPLNSLRQWILGLPGDATDYKLDDQYRLSEITYSQNGKNWKVVYGGYDTKTQPAMPANMELTDGGQRIKLKMDNWIVK</sequence>
<organism>
    <name type="scientific">Escherichia coli O139:H28 (strain E24377A / ETEC)</name>
    <dbReference type="NCBI Taxonomy" id="331111"/>
    <lineage>
        <taxon>Bacteria</taxon>
        <taxon>Pseudomonadati</taxon>
        <taxon>Pseudomonadota</taxon>
        <taxon>Gammaproteobacteria</taxon>
        <taxon>Enterobacterales</taxon>
        <taxon>Enterobacteriaceae</taxon>
        <taxon>Escherichia</taxon>
    </lineage>
</organism>
<reference key="1">
    <citation type="journal article" date="2008" name="J. Bacteriol.">
        <title>The pangenome structure of Escherichia coli: comparative genomic analysis of E. coli commensal and pathogenic isolates.</title>
        <authorList>
            <person name="Rasko D.A."/>
            <person name="Rosovitz M.J."/>
            <person name="Myers G.S.A."/>
            <person name="Mongodin E.F."/>
            <person name="Fricke W.F."/>
            <person name="Gajer P."/>
            <person name="Crabtree J."/>
            <person name="Sebaihia M."/>
            <person name="Thomson N.R."/>
            <person name="Chaudhuri R."/>
            <person name="Henderson I.R."/>
            <person name="Sperandio V."/>
            <person name="Ravel J."/>
        </authorList>
    </citation>
    <scope>NUCLEOTIDE SEQUENCE [LARGE SCALE GENOMIC DNA]</scope>
    <source>
        <strain>E24377A / ETEC</strain>
    </source>
</reference>
<gene>
    <name evidence="1" type="primary">lolB</name>
    <name type="ordered locus">EcE24377A_1357</name>
</gene>
<feature type="signal peptide" evidence="1">
    <location>
        <begin position="1"/>
        <end position="21"/>
    </location>
</feature>
<feature type="chain" id="PRO_1000058772" description="Outer-membrane lipoprotein LolB">
    <location>
        <begin position="22"/>
        <end position="207"/>
    </location>
</feature>
<feature type="lipid moiety-binding region" description="N-palmitoyl cysteine" evidence="1">
    <location>
        <position position="22"/>
    </location>
</feature>
<feature type="lipid moiety-binding region" description="S-diacylglycerol cysteine" evidence="1">
    <location>
        <position position="22"/>
    </location>
</feature>
<name>LOLB_ECO24</name>
<comment type="function">
    <text evidence="1">Plays a critical role in the incorporation of lipoproteins in the outer membrane after they are released by the LolA protein.</text>
</comment>
<comment type="subunit">
    <text evidence="1">Monomer.</text>
</comment>
<comment type="subcellular location">
    <subcellularLocation>
        <location evidence="1">Cell outer membrane</location>
        <topology evidence="1">Lipid-anchor</topology>
    </subcellularLocation>
</comment>
<comment type="similarity">
    <text evidence="1">Belongs to the LolB family.</text>
</comment>